<protein>
    <recommendedName>
        <fullName evidence="1">Bifunctional protein FolD</fullName>
    </recommendedName>
    <domain>
        <recommendedName>
            <fullName evidence="1">Methylenetetrahydrofolate dehydrogenase</fullName>
            <ecNumber evidence="1">1.5.1.5</ecNumber>
        </recommendedName>
    </domain>
    <domain>
        <recommendedName>
            <fullName evidence="1">Methenyltetrahydrofolate cyclohydrolase</fullName>
            <ecNumber evidence="1">3.5.4.9</ecNumber>
        </recommendedName>
    </domain>
</protein>
<proteinExistence type="inferred from homology"/>
<dbReference type="EC" id="1.5.1.5" evidence="1"/>
<dbReference type="EC" id="3.5.4.9" evidence="1"/>
<dbReference type="EMBL" id="CP000725">
    <property type="protein sequence ID" value="ABV09295.1"/>
    <property type="molecule type" value="Genomic_DNA"/>
</dbReference>
<dbReference type="RefSeq" id="WP_012000162.1">
    <property type="nucleotide sequence ID" value="NC_009785.1"/>
</dbReference>
<dbReference type="SMR" id="A8AW32"/>
<dbReference type="STRING" id="467705.SGO_0690"/>
<dbReference type="KEGG" id="sgo:SGO_0690"/>
<dbReference type="eggNOG" id="COG0190">
    <property type="taxonomic scope" value="Bacteria"/>
</dbReference>
<dbReference type="HOGENOM" id="CLU_034045_2_1_9"/>
<dbReference type="UniPathway" id="UPA00193"/>
<dbReference type="Proteomes" id="UP000001131">
    <property type="component" value="Chromosome"/>
</dbReference>
<dbReference type="GO" id="GO:0005829">
    <property type="term" value="C:cytosol"/>
    <property type="evidence" value="ECO:0007669"/>
    <property type="project" value="TreeGrafter"/>
</dbReference>
<dbReference type="GO" id="GO:0004477">
    <property type="term" value="F:methenyltetrahydrofolate cyclohydrolase activity"/>
    <property type="evidence" value="ECO:0007669"/>
    <property type="project" value="UniProtKB-UniRule"/>
</dbReference>
<dbReference type="GO" id="GO:0004488">
    <property type="term" value="F:methylenetetrahydrofolate dehydrogenase (NADP+) activity"/>
    <property type="evidence" value="ECO:0007669"/>
    <property type="project" value="UniProtKB-UniRule"/>
</dbReference>
<dbReference type="GO" id="GO:0000105">
    <property type="term" value="P:L-histidine biosynthetic process"/>
    <property type="evidence" value="ECO:0007669"/>
    <property type="project" value="UniProtKB-KW"/>
</dbReference>
<dbReference type="GO" id="GO:0009086">
    <property type="term" value="P:methionine biosynthetic process"/>
    <property type="evidence" value="ECO:0007669"/>
    <property type="project" value="UniProtKB-KW"/>
</dbReference>
<dbReference type="GO" id="GO:0006164">
    <property type="term" value="P:purine nucleotide biosynthetic process"/>
    <property type="evidence" value="ECO:0007669"/>
    <property type="project" value="UniProtKB-KW"/>
</dbReference>
<dbReference type="GO" id="GO:0035999">
    <property type="term" value="P:tetrahydrofolate interconversion"/>
    <property type="evidence" value="ECO:0007669"/>
    <property type="project" value="UniProtKB-UniRule"/>
</dbReference>
<dbReference type="CDD" id="cd01080">
    <property type="entry name" value="NAD_bind_m-THF_DH_Cyclohyd"/>
    <property type="match status" value="1"/>
</dbReference>
<dbReference type="FunFam" id="3.40.50.720:FF:000094">
    <property type="entry name" value="Bifunctional protein FolD"/>
    <property type="match status" value="1"/>
</dbReference>
<dbReference type="FunFam" id="3.40.50.10860:FF:000005">
    <property type="entry name" value="C-1-tetrahydrofolate synthase, cytoplasmic, putative"/>
    <property type="match status" value="1"/>
</dbReference>
<dbReference type="Gene3D" id="3.40.50.10860">
    <property type="entry name" value="Leucine Dehydrogenase, chain A, domain 1"/>
    <property type="match status" value="1"/>
</dbReference>
<dbReference type="Gene3D" id="3.40.50.720">
    <property type="entry name" value="NAD(P)-binding Rossmann-like Domain"/>
    <property type="match status" value="1"/>
</dbReference>
<dbReference type="HAMAP" id="MF_01576">
    <property type="entry name" value="THF_DHG_CYH"/>
    <property type="match status" value="1"/>
</dbReference>
<dbReference type="InterPro" id="IPR046346">
    <property type="entry name" value="Aminoacid_DH-like_N_sf"/>
</dbReference>
<dbReference type="InterPro" id="IPR036291">
    <property type="entry name" value="NAD(P)-bd_dom_sf"/>
</dbReference>
<dbReference type="InterPro" id="IPR000672">
    <property type="entry name" value="THF_DH/CycHdrlase"/>
</dbReference>
<dbReference type="InterPro" id="IPR020630">
    <property type="entry name" value="THF_DH/CycHdrlase_cat_dom"/>
</dbReference>
<dbReference type="InterPro" id="IPR020867">
    <property type="entry name" value="THF_DH/CycHdrlase_CS"/>
</dbReference>
<dbReference type="InterPro" id="IPR020631">
    <property type="entry name" value="THF_DH/CycHdrlase_NAD-bd_dom"/>
</dbReference>
<dbReference type="NCBIfam" id="NF008058">
    <property type="entry name" value="PRK10792.1"/>
    <property type="match status" value="1"/>
</dbReference>
<dbReference type="NCBIfam" id="NF010776">
    <property type="entry name" value="PRK14179.1"/>
    <property type="match status" value="1"/>
</dbReference>
<dbReference type="NCBIfam" id="NF010783">
    <property type="entry name" value="PRK14186.1"/>
    <property type="match status" value="1"/>
</dbReference>
<dbReference type="PANTHER" id="PTHR48099:SF5">
    <property type="entry name" value="C-1-TETRAHYDROFOLATE SYNTHASE, CYTOPLASMIC"/>
    <property type="match status" value="1"/>
</dbReference>
<dbReference type="PANTHER" id="PTHR48099">
    <property type="entry name" value="C-1-TETRAHYDROFOLATE SYNTHASE, CYTOPLASMIC-RELATED"/>
    <property type="match status" value="1"/>
</dbReference>
<dbReference type="Pfam" id="PF00763">
    <property type="entry name" value="THF_DHG_CYH"/>
    <property type="match status" value="1"/>
</dbReference>
<dbReference type="Pfam" id="PF02882">
    <property type="entry name" value="THF_DHG_CYH_C"/>
    <property type="match status" value="1"/>
</dbReference>
<dbReference type="PRINTS" id="PR00085">
    <property type="entry name" value="THFDHDRGNASE"/>
</dbReference>
<dbReference type="SUPFAM" id="SSF53223">
    <property type="entry name" value="Aminoacid dehydrogenase-like, N-terminal domain"/>
    <property type="match status" value="1"/>
</dbReference>
<dbReference type="SUPFAM" id="SSF51735">
    <property type="entry name" value="NAD(P)-binding Rossmann-fold domains"/>
    <property type="match status" value="1"/>
</dbReference>
<dbReference type="PROSITE" id="PS00766">
    <property type="entry name" value="THF_DHG_CYH_1"/>
    <property type="match status" value="1"/>
</dbReference>
<dbReference type="PROSITE" id="PS00767">
    <property type="entry name" value="THF_DHG_CYH_2"/>
    <property type="match status" value="1"/>
</dbReference>
<gene>
    <name evidence="1" type="primary">folD</name>
    <name type="ordered locus">SGO_0690</name>
</gene>
<comment type="function">
    <text evidence="1">Catalyzes the oxidation of 5,10-methylenetetrahydrofolate to 5,10-methenyltetrahydrofolate and then the hydrolysis of 5,10-methenyltetrahydrofolate to 10-formyltetrahydrofolate.</text>
</comment>
<comment type="catalytic activity">
    <reaction evidence="1">
        <text>(6R)-5,10-methylene-5,6,7,8-tetrahydrofolate + NADP(+) = (6R)-5,10-methenyltetrahydrofolate + NADPH</text>
        <dbReference type="Rhea" id="RHEA:22812"/>
        <dbReference type="ChEBI" id="CHEBI:15636"/>
        <dbReference type="ChEBI" id="CHEBI:57455"/>
        <dbReference type="ChEBI" id="CHEBI:57783"/>
        <dbReference type="ChEBI" id="CHEBI:58349"/>
        <dbReference type="EC" id="1.5.1.5"/>
    </reaction>
</comment>
<comment type="catalytic activity">
    <reaction evidence="1">
        <text>(6R)-5,10-methenyltetrahydrofolate + H2O = (6R)-10-formyltetrahydrofolate + H(+)</text>
        <dbReference type="Rhea" id="RHEA:23700"/>
        <dbReference type="ChEBI" id="CHEBI:15377"/>
        <dbReference type="ChEBI" id="CHEBI:15378"/>
        <dbReference type="ChEBI" id="CHEBI:57455"/>
        <dbReference type="ChEBI" id="CHEBI:195366"/>
        <dbReference type="EC" id="3.5.4.9"/>
    </reaction>
</comment>
<comment type="pathway">
    <text evidence="1">One-carbon metabolism; tetrahydrofolate interconversion.</text>
</comment>
<comment type="subunit">
    <text evidence="1">Homodimer.</text>
</comment>
<comment type="similarity">
    <text evidence="1">Belongs to the tetrahydrofolate dehydrogenase/cyclohydrolase family.</text>
</comment>
<sequence length="284" mass="30841">MAELIDGKALAAKLQGKLAQKTAKLKEKTGQTPGLVVVLVGNNPASQIYVRNKERSALAAGFRSKVERLPEETSQEELLSLIETYNQNPDWHGILVQLPLPDHIDDEAVLLAIDPDKDVDGFHPLNMGKLWSGHPVMIPATPAGIMAMFHEYGVELEGKRAVVIGRSNIVGKPMAQLLLAKNATVTLTHSRTHNLAKTAKRADILVVAIGRGHFVTKDFVKEGAVVIDVGMNRDENGKLIGDVQFDEVSEIASLITPVPGGVGPMTITMLMEQTYQAFKRSLES</sequence>
<evidence type="ECO:0000255" key="1">
    <source>
        <dbReference type="HAMAP-Rule" id="MF_01576"/>
    </source>
</evidence>
<name>FOLD_STRGC</name>
<feature type="chain" id="PRO_1000087925" description="Bifunctional protein FolD">
    <location>
        <begin position="1"/>
        <end position="284"/>
    </location>
</feature>
<feature type="binding site" evidence="1">
    <location>
        <begin position="165"/>
        <end position="167"/>
    </location>
    <ligand>
        <name>NADP(+)</name>
        <dbReference type="ChEBI" id="CHEBI:58349"/>
    </ligand>
</feature>
<feature type="binding site" evidence="1">
    <location>
        <position position="190"/>
    </location>
    <ligand>
        <name>NADP(+)</name>
        <dbReference type="ChEBI" id="CHEBI:58349"/>
    </ligand>
</feature>
<reference key="1">
    <citation type="journal article" date="2007" name="J. Bacteriol.">
        <title>Genome-wide transcriptional changes in Streptococcus gordonii in response to competence signaling peptide.</title>
        <authorList>
            <person name="Vickerman M.M."/>
            <person name="Iobst S."/>
            <person name="Jesionowski A.M."/>
            <person name="Gill S.R."/>
        </authorList>
    </citation>
    <scope>NUCLEOTIDE SEQUENCE [LARGE SCALE GENOMIC DNA]</scope>
    <source>
        <strain>Challis / ATCC 35105 / BCRC 15272 / CH1 / DL1 / V288</strain>
    </source>
</reference>
<keyword id="KW-0028">Amino-acid biosynthesis</keyword>
<keyword id="KW-0368">Histidine biosynthesis</keyword>
<keyword id="KW-0378">Hydrolase</keyword>
<keyword id="KW-0486">Methionine biosynthesis</keyword>
<keyword id="KW-0511">Multifunctional enzyme</keyword>
<keyword id="KW-0521">NADP</keyword>
<keyword id="KW-0554">One-carbon metabolism</keyword>
<keyword id="KW-0560">Oxidoreductase</keyword>
<keyword id="KW-0658">Purine biosynthesis</keyword>
<keyword id="KW-1185">Reference proteome</keyword>
<accession>A8AW32</accession>
<organism>
    <name type="scientific">Streptococcus gordonii (strain Challis / ATCC 35105 / BCRC 15272 / CH1 / DL1 / V288)</name>
    <dbReference type="NCBI Taxonomy" id="467705"/>
    <lineage>
        <taxon>Bacteria</taxon>
        <taxon>Bacillati</taxon>
        <taxon>Bacillota</taxon>
        <taxon>Bacilli</taxon>
        <taxon>Lactobacillales</taxon>
        <taxon>Streptococcaceae</taxon>
        <taxon>Streptococcus</taxon>
    </lineage>
</organism>